<protein>
    <recommendedName>
        <fullName evidence="1">Ribosome biogenesis protein bop1-A</fullName>
    </recommendedName>
    <alternativeName>
        <fullName evidence="1">Block of proliferation 1 protein A</fullName>
    </alternativeName>
</protein>
<sequence>MKRGSQGEAGSPQTEEPEPLFSEEDRSLRDGNALDESDSEESQYSGLEDSGTDRSDDEEDHWSEEEENPGKSPKEIIKVPNRSSKSPADSAADEEDRPNEIKEYENDSSDEEDIRNTVGNIPMEWYKDLPHIGYDLDGRKIFKPLRSKDQLEEFLDKMENPDYWRTIHDKKTGQDIKLTDEQVDLVERLQKGQFGDINYDPYQPAIDFFTHETMIHPVTNRPADKRSFIPSLIEKEKVSKLVHAIKMGWIQPRKPREDTATYYDLWAKEDPNSILGRHKMHVPAPKLPLPGHEQSYNPPPEYLMSEEERLSWEQQDPEDRKLPFLPQRFNCLRAVPGYARFIHERFERCLDLYLCPRQRKMRVNVDPEDLIPKLPKPRDLQPFPTIQSLIYKGHKDLVRCISVSPSGQWLVSGSDDCSVRFWEVSTGRCMKSVVLEGAVKSISWNPNPGLVLVAACVDRSVVLINPGLGDRLLCSATDQHISGYQPPEEEVQQPVTWEEVEGAQYSNGLRLCIKHQKEVKQVTFHARGDYFAVVLPDNGNSQVLIHQLSRRRSQNPFRKNKGQVQKVLFHPTRPFFFVATQRYVRVYNLLKQELTKKLLTNCKWVSSIAVHPAGDNLICGSYDSKLAWFDMDLSTKPYKVLRHHKKALRAVSFHKSYPLFASGSDDGSVIVCHGMVYNDLLQNPLIVPVKVLRGHAIHRDLGVLDVTFHPTQPWVFSSGADATIRLFT</sequence>
<feature type="chain" id="PRO_0000370388" description="Ribosome biogenesis protein bop1-A">
    <location>
        <begin position="1"/>
        <end position="728"/>
    </location>
</feature>
<feature type="repeat" description="WD 1">
    <location>
        <begin position="393"/>
        <end position="432"/>
    </location>
</feature>
<feature type="repeat" description="WD 2">
    <location>
        <begin position="434"/>
        <end position="474"/>
    </location>
</feature>
<feature type="repeat" description="WD 3">
    <location>
        <begin position="514"/>
        <end position="556"/>
    </location>
</feature>
<feature type="repeat" description="WD 4">
    <location>
        <begin position="559"/>
        <end position="597"/>
    </location>
</feature>
<feature type="repeat" description="WD 5">
    <location>
        <begin position="600"/>
        <end position="639"/>
    </location>
</feature>
<feature type="repeat" description="WD 6">
    <location>
        <begin position="643"/>
        <end position="682"/>
    </location>
</feature>
<feature type="repeat" description="WD 7">
    <location>
        <begin position="698"/>
        <end position="728"/>
    </location>
</feature>
<feature type="region of interest" description="Disordered" evidence="2">
    <location>
        <begin position="1"/>
        <end position="114"/>
    </location>
</feature>
<feature type="compositionally biased region" description="Acidic residues" evidence="2">
    <location>
        <begin position="55"/>
        <end position="67"/>
    </location>
</feature>
<feature type="compositionally biased region" description="Basic and acidic residues" evidence="2">
    <location>
        <begin position="68"/>
        <end position="77"/>
    </location>
</feature>
<organism>
    <name type="scientific">Xenopus laevis</name>
    <name type="common">African clawed frog</name>
    <dbReference type="NCBI Taxonomy" id="8355"/>
    <lineage>
        <taxon>Eukaryota</taxon>
        <taxon>Metazoa</taxon>
        <taxon>Chordata</taxon>
        <taxon>Craniata</taxon>
        <taxon>Vertebrata</taxon>
        <taxon>Euteleostomi</taxon>
        <taxon>Amphibia</taxon>
        <taxon>Batrachia</taxon>
        <taxon>Anura</taxon>
        <taxon>Pipoidea</taxon>
        <taxon>Pipidae</taxon>
        <taxon>Xenopodinae</taxon>
        <taxon>Xenopus</taxon>
        <taxon>Xenopus</taxon>
    </lineage>
</organism>
<name>BOP1A_XENLA</name>
<comment type="function">
    <text evidence="1">Component of the PeBoW complex, which is required for maturation of 28S and 5.8S ribosomal RNAs and formation of the 60S ribosome.</text>
</comment>
<comment type="subunit">
    <text evidence="1">Component of the PeBoW complex, composed of bop1, pes1 and wdr12. The complex is held together by bop1, which interacts with pes1 via its N-terminal domain and with wdr12 via a high-affinity interaction between the seven-bladed beta-propeller domains of the 2 proteins. The PeBoW complex associates with the 66S pre-ribosome.</text>
</comment>
<comment type="subcellular location">
    <subcellularLocation>
        <location evidence="1">Nucleus</location>
        <location evidence="1">Nucleolus</location>
    </subcellularLocation>
    <subcellularLocation>
        <location evidence="1">Nucleus</location>
        <location evidence="1">Nucleoplasm</location>
    </subcellularLocation>
</comment>
<comment type="similarity">
    <text evidence="1">Belongs to the WD repeat BOP1/ERB1 family.</text>
</comment>
<keyword id="KW-0539">Nucleus</keyword>
<keyword id="KW-1185">Reference proteome</keyword>
<keyword id="KW-0677">Repeat</keyword>
<keyword id="KW-0690">Ribosome biogenesis</keyword>
<keyword id="KW-0698">rRNA processing</keyword>
<keyword id="KW-0853">WD repeat</keyword>
<accession>Q7T0W1</accession>
<evidence type="ECO:0000255" key="1">
    <source>
        <dbReference type="HAMAP-Rule" id="MF_03027"/>
    </source>
</evidence>
<evidence type="ECO:0000256" key="2">
    <source>
        <dbReference type="SAM" id="MobiDB-lite"/>
    </source>
</evidence>
<proteinExistence type="evidence at transcript level"/>
<gene>
    <name type="primary">bop1-a</name>
</gene>
<reference key="1">
    <citation type="submission" date="2003-08" db="EMBL/GenBank/DDBJ databases">
        <authorList>
            <consortium name="NIH - Xenopus Gene Collection (XGC) project"/>
        </authorList>
    </citation>
    <scope>NUCLEOTIDE SEQUENCE [LARGE SCALE MRNA]</scope>
    <source>
        <tissue>Embryo</tissue>
    </source>
</reference>
<dbReference type="EMBL" id="BC056015">
    <property type="protein sequence ID" value="AAH56015.1"/>
    <property type="molecule type" value="mRNA"/>
</dbReference>
<dbReference type="RefSeq" id="NP_001079852.1">
    <property type="nucleotide sequence ID" value="NM_001086383.1"/>
</dbReference>
<dbReference type="SMR" id="Q7T0W1"/>
<dbReference type="DNASU" id="379542"/>
<dbReference type="GeneID" id="379542"/>
<dbReference type="KEGG" id="xla:379542"/>
<dbReference type="AGR" id="Xenbase:XB-GENE-6255479"/>
<dbReference type="CTD" id="379542"/>
<dbReference type="Xenbase" id="XB-GENE-6255479">
    <property type="gene designation" value="bop1.S"/>
</dbReference>
<dbReference type="OrthoDB" id="5571054at2759"/>
<dbReference type="Proteomes" id="UP000186698">
    <property type="component" value="Chromosome 6S"/>
</dbReference>
<dbReference type="Bgee" id="379542">
    <property type="expression patterns" value="Expressed in oocyte and 19 other cell types or tissues"/>
</dbReference>
<dbReference type="GO" id="GO:0005654">
    <property type="term" value="C:nucleoplasm"/>
    <property type="evidence" value="ECO:0007669"/>
    <property type="project" value="UniProtKB-SubCell"/>
</dbReference>
<dbReference type="GO" id="GO:0070545">
    <property type="term" value="C:PeBoW complex"/>
    <property type="evidence" value="ECO:0000250"/>
    <property type="project" value="UniProtKB"/>
</dbReference>
<dbReference type="GO" id="GO:0030687">
    <property type="term" value="C:preribosome, large subunit precursor"/>
    <property type="evidence" value="ECO:0000318"/>
    <property type="project" value="GO_Central"/>
</dbReference>
<dbReference type="GO" id="GO:0043021">
    <property type="term" value="F:ribonucleoprotein complex binding"/>
    <property type="evidence" value="ECO:0000318"/>
    <property type="project" value="GO_Central"/>
</dbReference>
<dbReference type="GO" id="GO:0000466">
    <property type="term" value="P:maturation of 5.8S rRNA from tricistronic rRNA transcript (SSU-rRNA, 5.8S rRNA, LSU-rRNA)"/>
    <property type="evidence" value="ECO:0007669"/>
    <property type="project" value="UniProtKB-UniRule"/>
</dbReference>
<dbReference type="GO" id="GO:0000463">
    <property type="term" value="P:maturation of LSU-rRNA from tricistronic rRNA transcript (SSU-rRNA, 5.8S rRNA, LSU-rRNA)"/>
    <property type="evidence" value="ECO:0000250"/>
    <property type="project" value="UniProtKB"/>
</dbReference>
<dbReference type="GO" id="GO:0051726">
    <property type="term" value="P:regulation of cell cycle"/>
    <property type="evidence" value="ECO:0000250"/>
    <property type="project" value="UniProtKB"/>
</dbReference>
<dbReference type="FunFam" id="2.130.10.10:FF:000061">
    <property type="entry name" value="Ribosome biogenesis protein BOP1 homolog"/>
    <property type="match status" value="1"/>
</dbReference>
<dbReference type="Gene3D" id="2.130.10.10">
    <property type="entry name" value="YVTN repeat-like/Quinoprotein amine dehydrogenase"/>
    <property type="match status" value="1"/>
</dbReference>
<dbReference type="HAMAP" id="MF_03027">
    <property type="entry name" value="BOP1"/>
    <property type="match status" value="1"/>
</dbReference>
<dbReference type="InterPro" id="IPR028598">
    <property type="entry name" value="BOP1/Erb1"/>
</dbReference>
<dbReference type="InterPro" id="IPR012953">
    <property type="entry name" value="BOP1_N_dom"/>
</dbReference>
<dbReference type="InterPro" id="IPR015943">
    <property type="entry name" value="WD40/YVTN_repeat-like_dom_sf"/>
</dbReference>
<dbReference type="InterPro" id="IPR019775">
    <property type="entry name" value="WD40_repeat_CS"/>
</dbReference>
<dbReference type="InterPro" id="IPR036322">
    <property type="entry name" value="WD40_repeat_dom_sf"/>
</dbReference>
<dbReference type="InterPro" id="IPR001680">
    <property type="entry name" value="WD40_rpt"/>
</dbReference>
<dbReference type="PANTHER" id="PTHR17605:SF0">
    <property type="entry name" value="RIBOSOME BIOGENESIS PROTEIN BOP1"/>
    <property type="match status" value="1"/>
</dbReference>
<dbReference type="PANTHER" id="PTHR17605">
    <property type="entry name" value="RIBOSOME BIOGENESIS PROTEIN BOP1 BLOCK OF PROLIFERATION 1 PROTEIN"/>
    <property type="match status" value="1"/>
</dbReference>
<dbReference type="Pfam" id="PF08145">
    <property type="entry name" value="BOP1NT"/>
    <property type="match status" value="1"/>
</dbReference>
<dbReference type="Pfam" id="PF00400">
    <property type="entry name" value="WD40"/>
    <property type="match status" value="4"/>
</dbReference>
<dbReference type="SMART" id="SM01035">
    <property type="entry name" value="BOP1NT"/>
    <property type="match status" value="1"/>
</dbReference>
<dbReference type="SMART" id="SM00320">
    <property type="entry name" value="WD40"/>
    <property type="match status" value="7"/>
</dbReference>
<dbReference type="SUPFAM" id="SSF50978">
    <property type="entry name" value="WD40 repeat-like"/>
    <property type="match status" value="1"/>
</dbReference>
<dbReference type="PROSITE" id="PS00678">
    <property type="entry name" value="WD_REPEATS_1"/>
    <property type="match status" value="1"/>
</dbReference>
<dbReference type="PROSITE" id="PS50082">
    <property type="entry name" value="WD_REPEATS_2"/>
    <property type="match status" value="1"/>
</dbReference>
<dbReference type="PROSITE" id="PS50294">
    <property type="entry name" value="WD_REPEATS_REGION"/>
    <property type="match status" value="2"/>
</dbReference>